<accession>B9E0C8</accession>
<name>TAL_CLOK1</name>
<keyword id="KW-0963">Cytoplasm</keyword>
<keyword id="KW-0570">Pentose shunt</keyword>
<keyword id="KW-0704">Schiff base</keyword>
<keyword id="KW-0808">Transferase</keyword>
<organism>
    <name type="scientific">Clostridium kluyveri (strain NBRC 12016)</name>
    <dbReference type="NCBI Taxonomy" id="583346"/>
    <lineage>
        <taxon>Bacteria</taxon>
        <taxon>Bacillati</taxon>
        <taxon>Bacillota</taxon>
        <taxon>Clostridia</taxon>
        <taxon>Eubacteriales</taxon>
        <taxon>Clostridiaceae</taxon>
        <taxon>Clostridium</taxon>
    </lineage>
</organism>
<gene>
    <name evidence="1" type="primary">tal</name>
    <name type="ordered locus">CKR_0902</name>
</gene>
<feature type="chain" id="PRO_1000198471" description="Probable transaldolase">
    <location>
        <begin position="1"/>
        <end position="215"/>
    </location>
</feature>
<feature type="active site" description="Schiff-base intermediate with substrate" evidence="1">
    <location>
        <position position="83"/>
    </location>
</feature>
<dbReference type="EC" id="2.2.1.2" evidence="1"/>
<dbReference type="EMBL" id="AP009049">
    <property type="protein sequence ID" value="BAH05953.1"/>
    <property type="molecule type" value="Genomic_DNA"/>
</dbReference>
<dbReference type="RefSeq" id="WP_012101370.1">
    <property type="nucleotide sequence ID" value="NC_011837.1"/>
</dbReference>
<dbReference type="SMR" id="B9E0C8"/>
<dbReference type="KEGG" id="ckr:CKR_0902"/>
<dbReference type="HOGENOM" id="CLU_079764_0_0_9"/>
<dbReference type="UniPathway" id="UPA00115">
    <property type="reaction ID" value="UER00414"/>
</dbReference>
<dbReference type="Proteomes" id="UP000007969">
    <property type="component" value="Chromosome"/>
</dbReference>
<dbReference type="GO" id="GO:0005737">
    <property type="term" value="C:cytoplasm"/>
    <property type="evidence" value="ECO:0007669"/>
    <property type="project" value="UniProtKB-SubCell"/>
</dbReference>
<dbReference type="GO" id="GO:0016832">
    <property type="term" value="F:aldehyde-lyase activity"/>
    <property type="evidence" value="ECO:0007669"/>
    <property type="project" value="InterPro"/>
</dbReference>
<dbReference type="GO" id="GO:0004801">
    <property type="term" value="F:transaldolase activity"/>
    <property type="evidence" value="ECO:0007669"/>
    <property type="project" value="UniProtKB-UniRule"/>
</dbReference>
<dbReference type="GO" id="GO:0005975">
    <property type="term" value="P:carbohydrate metabolic process"/>
    <property type="evidence" value="ECO:0007669"/>
    <property type="project" value="InterPro"/>
</dbReference>
<dbReference type="GO" id="GO:0006098">
    <property type="term" value="P:pentose-phosphate shunt"/>
    <property type="evidence" value="ECO:0007669"/>
    <property type="project" value="UniProtKB-UniRule"/>
</dbReference>
<dbReference type="CDD" id="cd00956">
    <property type="entry name" value="Transaldolase_FSA"/>
    <property type="match status" value="1"/>
</dbReference>
<dbReference type="FunFam" id="3.20.20.70:FF:000018">
    <property type="entry name" value="Probable transaldolase"/>
    <property type="match status" value="1"/>
</dbReference>
<dbReference type="Gene3D" id="3.20.20.70">
    <property type="entry name" value="Aldolase class I"/>
    <property type="match status" value="1"/>
</dbReference>
<dbReference type="HAMAP" id="MF_00494">
    <property type="entry name" value="Transaldolase_3b"/>
    <property type="match status" value="1"/>
</dbReference>
<dbReference type="InterPro" id="IPR013785">
    <property type="entry name" value="Aldolase_TIM"/>
</dbReference>
<dbReference type="InterPro" id="IPR001585">
    <property type="entry name" value="TAL/FSA"/>
</dbReference>
<dbReference type="InterPro" id="IPR022999">
    <property type="entry name" value="Transaldolase_3B"/>
</dbReference>
<dbReference type="InterPro" id="IPR004731">
    <property type="entry name" value="Transaldolase_3B/F6P_aldolase"/>
</dbReference>
<dbReference type="InterPro" id="IPR018225">
    <property type="entry name" value="Transaldolase_AS"/>
</dbReference>
<dbReference type="InterPro" id="IPR033919">
    <property type="entry name" value="TSA/FSA_arc/bac"/>
</dbReference>
<dbReference type="NCBIfam" id="TIGR00875">
    <property type="entry name" value="fsa_talC_mipB"/>
    <property type="match status" value="1"/>
</dbReference>
<dbReference type="PANTHER" id="PTHR10683">
    <property type="entry name" value="TRANSALDOLASE"/>
    <property type="match status" value="1"/>
</dbReference>
<dbReference type="PANTHER" id="PTHR10683:SF36">
    <property type="entry name" value="TRANSALDOLASE"/>
    <property type="match status" value="1"/>
</dbReference>
<dbReference type="Pfam" id="PF00923">
    <property type="entry name" value="TAL_FSA"/>
    <property type="match status" value="1"/>
</dbReference>
<dbReference type="SUPFAM" id="SSF51569">
    <property type="entry name" value="Aldolase"/>
    <property type="match status" value="1"/>
</dbReference>
<dbReference type="PROSITE" id="PS01054">
    <property type="entry name" value="TRANSALDOLASE_1"/>
    <property type="match status" value="1"/>
</dbReference>
<dbReference type="PROSITE" id="PS00958">
    <property type="entry name" value="TRANSALDOLASE_2"/>
    <property type="match status" value="1"/>
</dbReference>
<proteinExistence type="inferred from homology"/>
<protein>
    <recommendedName>
        <fullName evidence="1">Probable transaldolase</fullName>
        <ecNumber evidence="1">2.2.1.2</ecNumber>
    </recommendedName>
</protein>
<reference key="1">
    <citation type="submission" date="2005-09" db="EMBL/GenBank/DDBJ databases">
        <title>Complete genome sequence of Clostridium kluyveri and comparative genomics of Clostridia species.</title>
        <authorList>
            <person name="Inui M."/>
            <person name="Nonaka H."/>
            <person name="Shinoda Y."/>
            <person name="Ikenaga Y."/>
            <person name="Abe M."/>
            <person name="Naito K."/>
            <person name="Vertes A.A."/>
            <person name="Yukawa H."/>
        </authorList>
    </citation>
    <scope>NUCLEOTIDE SEQUENCE [LARGE SCALE GENOMIC DNA]</scope>
    <source>
        <strain>NBRC 12016</strain>
    </source>
</reference>
<evidence type="ECO:0000255" key="1">
    <source>
        <dbReference type="HAMAP-Rule" id="MF_00494"/>
    </source>
</evidence>
<sequence>MKLFIDTANVDEIRKANDMGIICGVTTNPSLIAKEGRNFKEVVKEITDIVDGPISAEVISLEWKEMVKEARELVKIHKNIVIKIPMTQEGLKAVKVLSQEEIKTNVTLIFSAAQALLAAKAGASYVSPFLGRLDDVGMDGIKLIEEIVTIFKVQNIVTEIIAASIRGPIHVVKCAALGSHIATVPYKVLVQMCKHPLTDIGIERFLKDWESVPDK</sequence>
<comment type="function">
    <text evidence="1">Transaldolase is important for the balance of metabolites in the pentose-phosphate pathway.</text>
</comment>
<comment type="catalytic activity">
    <reaction evidence="1">
        <text>D-sedoheptulose 7-phosphate + D-glyceraldehyde 3-phosphate = D-erythrose 4-phosphate + beta-D-fructose 6-phosphate</text>
        <dbReference type="Rhea" id="RHEA:17053"/>
        <dbReference type="ChEBI" id="CHEBI:16897"/>
        <dbReference type="ChEBI" id="CHEBI:57483"/>
        <dbReference type="ChEBI" id="CHEBI:57634"/>
        <dbReference type="ChEBI" id="CHEBI:59776"/>
        <dbReference type="EC" id="2.2.1.2"/>
    </reaction>
</comment>
<comment type="pathway">
    <text evidence="1">Carbohydrate degradation; pentose phosphate pathway; D-glyceraldehyde 3-phosphate and beta-D-fructose 6-phosphate from D-ribose 5-phosphate and D-xylulose 5-phosphate (non-oxidative stage): step 2/3.</text>
</comment>
<comment type="subcellular location">
    <subcellularLocation>
        <location evidence="1">Cytoplasm</location>
    </subcellularLocation>
</comment>
<comment type="similarity">
    <text evidence="1">Belongs to the transaldolase family. Type 3B subfamily.</text>
</comment>